<evidence type="ECO:0000255" key="1">
    <source>
        <dbReference type="HAMAP-Rule" id="MF_01367"/>
    </source>
</evidence>
<evidence type="ECO:0000305" key="2"/>
<protein>
    <recommendedName>
        <fullName evidence="1">Large ribosomal subunit protein uL14</fullName>
    </recommendedName>
    <alternativeName>
        <fullName evidence="2">50S ribosomal protein L14</fullName>
    </alternativeName>
</protein>
<proteinExistence type="inferred from homology"/>
<sequence length="122" mass="13307">MIQMQTELQVADNSGAKRVECIKVLGGSHRRYASVGDVIKVTVKEAAPRGKAKKGSVYNAVVVRTAKGVRRKDGSKVRFDDNAAVLLNNNGQPIGTRIFGPVTRELRTEKFMKIVSLAPEVL</sequence>
<accession>B0U0X9</accession>
<keyword id="KW-0687">Ribonucleoprotein</keyword>
<keyword id="KW-0689">Ribosomal protein</keyword>
<keyword id="KW-0694">RNA-binding</keyword>
<keyword id="KW-0699">rRNA-binding</keyword>
<name>RL14_FRAP2</name>
<gene>
    <name evidence="1" type="primary">rplN</name>
    <name type="ordered locus">Fphi_0577</name>
</gene>
<organism>
    <name type="scientific">Francisella philomiragia subsp. philomiragia (strain ATCC 25017 / CCUG 19701 / FSC 153 / O#319-036)</name>
    <dbReference type="NCBI Taxonomy" id="484022"/>
    <lineage>
        <taxon>Bacteria</taxon>
        <taxon>Pseudomonadati</taxon>
        <taxon>Pseudomonadota</taxon>
        <taxon>Gammaproteobacteria</taxon>
        <taxon>Thiotrichales</taxon>
        <taxon>Francisellaceae</taxon>
        <taxon>Francisella</taxon>
    </lineage>
</organism>
<dbReference type="EMBL" id="CP000937">
    <property type="protein sequence ID" value="ABZ86795.1"/>
    <property type="molecule type" value="Genomic_DNA"/>
</dbReference>
<dbReference type="SMR" id="B0U0X9"/>
<dbReference type="KEGG" id="fph:Fphi_0577"/>
<dbReference type="eggNOG" id="COG0093">
    <property type="taxonomic scope" value="Bacteria"/>
</dbReference>
<dbReference type="HOGENOM" id="CLU_095071_2_1_6"/>
<dbReference type="GO" id="GO:0022625">
    <property type="term" value="C:cytosolic large ribosomal subunit"/>
    <property type="evidence" value="ECO:0007669"/>
    <property type="project" value="TreeGrafter"/>
</dbReference>
<dbReference type="GO" id="GO:0070180">
    <property type="term" value="F:large ribosomal subunit rRNA binding"/>
    <property type="evidence" value="ECO:0007669"/>
    <property type="project" value="TreeGrafter"/>
</dbReference>
<dbReference type="GO" id="GO:0003735">
    <property type="term" value="F:structural constituent of ribosome"/>
    <property type="evidence" value="ECO:0007669"/>
    <property type="project" value="InterPro"/>
</dbReference>
<dbReference type="GO" id="GO:0006412">
    <property type="term" value="P:translation"/>
    <property type="evidence" value="ECO:0007669"/>
    <property type="project" value="UniProtKB-UniRule"/>
</dbReference>
<dbReference type="CDD" id="cd00337">
    <property type="entry name" value="Ribosomal_uL14"/>
    <property type="match status" value="1"/>
</dbReference>
<dbReference type="FunFam" id="2.40.150.20:FF:000001">
    <property type="entry name" value="50S ribosomal protein L14"/>
    <property type="match status" value="1"/>
</dbReference>
<dbReference type="Gene3D" id="2.40.150.20">
    <property type="entry name" value="Ribosomal protein L14"/>
    <property type="match status" value="1"/>
</dbReference>
<dbReference type="HAMAP" id="MF_01367">
    <property type="entry name" value="Ribosomal_uL14"/>
    <property type="match status" value="1"/>
</dbReference>
<dbReference type="InterPro" id="IPR000218">
    <property type="entry name" value="Ribosomal_uL14"/>
</dbReference>
<dbReference type="InterPro" id="IPR005745">
    <property type="entry name" value="Ribosomal_uL14_bac-type"/>
</dbReference>
<dbReference type="InterPro" id="IPR019972">
    <property type="entry name" value="Ribosomal_uL14_CS"/>
</dbReference>
<dbReference type="InterPro" id="IPR036853">
    <property type="entry name" value="Ribosomal_uL14_sf"/>
</dbReference>
<dbReference type="NCBIfam" id="TIGR01067">
    <property type="entry name" value="rplN_bact"/>
    <property type="match status" value="1"/>
</dbReference>
<dbReference type="PANTHER" id="PTHR11761">
    <property type="entry name" value="50S/60S RIBOSOMAL PROTEIN L14/L23"/>
    <property type="match status" value="1"/>
</dbReference>
<dbReference type="PANTHER" id="PTHR11761:SF3">
    <property type="entry name" value="LARGE RIBOSOMAL SUBUNIT PROTEIN UL14M"/>
    <property type="match status" value="1"/>
</dbReference>
<dbReference type="Pfam" id="PF00238">
    <property type="entry name" value="Ribosomal_L14"/>
    <property type="match status" value="1"/>
</dbReference>
<dbReference type="SMART" id="SM01374">
    <property type="entry name" value="Ribosomal_L14"/>
    <property type="match status" value="1"/>
</dbReference>
<dbReference type="SUPFAM" id="SSF50193">
    <property type="entry name" value="Ribosomal protein L14"/>
    <property type="match status" value="1"/>
</dbReference>
<dbReference type="PROSITE" id="PS00049">
    <property type="entry name" value="RIBOSOMAL_L14"/>
    <property type="match status" value="1"/>
</dbReference>
<comment type="function">
    <text evidence="1">Binds to 23S rRNA. Forms part of two intersubunit bridges in the 70S ribosome.</text>
</comment>
<comment type="subunit">
    <text evidence="1">Part of the 50S ribosomal subunit. Forms a cluster with proteins L3 and L19. In the 70S ribosome, L14 and L19 interact and together make contacts with the 16S rRNA in bridges B5 and B8.</text>
</comment>
<comment type="similarity">
    <text evidence="1">Belongs to the universal ribosomal protein uL14 family.</text>
</comment>
<reference key="1">
    <citation type="submission" date="2007-12" db="EMBL/GenBank/DDBJ databases">
        <title>Complete sequence of chromosome of Francisella philomiragia subsp. philomiragia ATCC 25017.</title>
        <authorList>
            <consortium name="US DOE Joint Genome Institute"/>
            <person name="Copeland A."/>
            <person name="Lucas S."/>
            <person name="Lapidus A."/>
            <person name="Barry K."/>
            <person name="Detter J.C."/>
            <person name="Glavina del Rio T."/>
            <person name="Hammon N."/>
            <person name="Israni S."/>
            <person name="Dalin E."/>
            <person name="Tice H."/>
            <person name="Pitluck S."/>
            <person name="Chain P."/>
            <person name="Malfatti S."/>
            <person name="Shin M."/>
            <person name="Vergez L."/>
            <person name="Schmutz J."/>
            <person name="Larimer F."/>
            <person name="Land M."/>
            <person name="Hauser L."/>
            <person name="Richardson P."/>
        </authorList>
    </citation>
    <scope>NUCLEOTIDE SEQUENCE [LARGE SCALE GENOMIC DNA]</scope>
    <source>
        <strain>ATCC 25017 / CCUG 19701 / FSC 153 / O#319-036</strain>
    </source>
</reference>
<feature type="chain" id="PRO_1000087129" description="Large ribosomal subunit protein uL14">
    <location>
        <begin position="1"/>
        <end position="122"/>
    </location>
</feature>